<keyword id="KW-0903">Direct protein sequencing</keyword>
<keyword id="KW-0964">Secreted</keyword>
<keyword id="KW-0749">Sporulation</keyword>
<keyword id="KW-0800">Toxin</keyword>
<keyword id="KW-0843">Virulence</keyword>
<reference key="1">
    <citation type="journal article" date="1996" name="J. Bacteriol.">
        <title>Cloning and expression of the first anaerobic toxin gene from Clostridium bifermentans subsp. malaysia, encoding a new mosquitocidal protein with homologies to Bacillus thuringiensis delta-endotoxins.</title>
        <authorList>
            <person name="Barloy F."/>
            <person name="Delecluse A."/>
            <person name="Nicolas L."/>
            <person name="Lecadet M.-M."/>
        </authorList>
    </citation>
    <scope>NUCLEOTIDE SEQUENCE [GENOMIC DNA]</scope>
    <scope>PROTEIN SEQUENCE OF 1-15 AND 374-388</scope>
    <source>
        <strain>CH18 / subsp. Malaysia</strain>
    </source>
</reference>
<name>C16AA_PARBF</name>
<protein>
    <recommendedName>
        <fullName>Pesticidal crystal-like protein Cry16Aa</fullName>
    </recommendedName>
    <alternativeName>
        <fullName>Cbm71 mosquitocidal toxin</fullName>
    </alternativeName>
    <alternativeName>
        <fullName>Insecticidal toxin CryXVIA(a)</fullName>
    </alternativeName>
</protein>
<evidence type="ECO:0000305" key="1"/>
<gene>
    <name type="primary">cry16Aa</name>
    <name type="synonym">cbm71</name>
    <name type="synonym">cryXVIA(a)</name>
</gene>
<comment type="function">
    <text>Toxin active on mosquito larvae of the species Aedes aegypti, Culex pipiens and Anopheles stephensi.</text>
</comment>
<comment type="subcellular location">
    <subcellularLocation>
        <location>Secreted</location>
    </subcellularLocation>
</comment>
<comment type="developmental stage">
    <text>Produced during sporulation. The expression decreases considerably with cell lysis.</text>
</comment>
<comment type="similarity">
    <text evidence="1">Belongs to the delta endotoxin family.</text>
</comment>
<accession>Q45882</accession>
<organism>
    <name type="scientific">Paraclostridium bifermentans</name>
    <name type="common">Clostridium bifermentans</name>
    <dbReference type="NCBI Taxonomy" id="1490"/>
    <lineage>
        <taxon>Bacteria</taxon>
        <taxon>Bacillati</taxon>
        <taxon>Bacillota</taxon>
        <taxon>Clostridia</taxon>
        <taxon>Peptostreptococcales</taxon>
        <taxon>Peptostreptococcaceae</taxon>
        <taxon>Paraclostridium</taxon>
    </lineage>
</organism>
<sequence length="613" mass="71173">MNTNIFSTHLEFSKGVASVFKVIDTIHNISKNNNFNNILTQDFIIDTILSILWEDPNENEIFSSMIEDGETITNKNLSAQTKEGLLLNSNSFGLKFKYYNNAFRSWIDNYNPTSIDDVVYRFKDVNSICENNINEFKVKNYEVTVLPIYMQIANLHLLLLRDGMIYGDAWNLYRELGFSDQDSFYNHVLDKTKFYINDCLNYYNTGLSNLKLDPNNSWIDITRYCRFMTFYILDMISICPIYDTKVYDKPINMQTLTRKVYSDPVNFIDENIPISEYEKMYNISPELFSTLFSISFYTNKSGNKFLNGHVNRHVGTDLNYNGLRETHYGNYGSNYEVESMAFDDIKAYSNNYFNNTQNNNPTSVKSIKFLITKNNDEWIYGEPDSSNIDFTRNIQGYLSNLNNESYTHSLSDMILANNDKIQINIDTPHSYSYSWIYKGIEDTNYISDKLINQIPLVKEVKLKSRHYSEISVIKGPGFTGGDLILSKVHKPANQIPAQYMKNKITIPIKTKFPAGSQDFKVRLCYASNHDIGLIRLIAGSKYITTNIQQTFNTTENNPSLIYDDFKYFNFNETLSITSSGIDELYLEFYYSYTDGNFEDFPKLSIPYTRNYSC</sequence>
<proteinExistence type="evidence at protein level"/>
<dbReference type="EMBL" id="X94146">
    <property type="protein sequence ID" value="CAA63860.1"/>
    <property type="molecule type" value="Genomic_DNA"/>
</dbReference>
<dbReference type="PIR" id="JC6033">
    <property type="entry name" value="JC6033"/>
</dbReference>
<dbReference type="SMR" id="Q45882"/>
<dbReference type="GO" id="GO:0005576">
    <property type="term" value="C:extracellular region"/>
    <property type="evidence" value="ECO:0007669"/>
    <property type="project" value="UniProtKB-SubCell"/>
</dbReference>
<dbReference type="GO" id="GO:0005102">
    <property type="term" value="F:signaling receptor binding"/>
    <property type="evidence" value="ECO:0007669"/>
    <property type="project" value="InterPro"/>
</dbReference>
<dbReference type="GO" id="GO:0090729">
    <property type="term" value="F:toxin activity"/>
    <property type="evidence" value="ECO:0007669"/>
    <property type="project" value="UniProtKB-KW"/>
</dbReference>
<dbReference type="GO" id="GO:0030435">
    <property type="term" value="P:sporulation resulting in formation of a cellular spore"/>
    <property type="evidence" value="ECO:0007669"/>
    <property type="project" value="UniProtKB-KW"/>
</dbReference>
<dbReference type="GO" id="GO:0001907">
    <property type="term" value="P:symbiont-mediated killing of host cell"/>
    <property type="evidence" value="ECO:0007669"/>
    <property type="project" value="InterPro"/>
</dbReference>
<dbReference type="CDD" id="cd04085">
    <property type="entry name" value="delta_endotoxin_C"/>
    <property type="match status" value="1"/>
</dbReference>
<dbReference type="Gene3D" id="2.60.120.260">
    <property type="entry name" value="Galactose-binding domain-like"/>
    <property type="match status" value="1"/>
</dbReference>
<dbReference type="Gene3D" id="2.100.10.10">
    <property type="entry name" value="Pesticidal crystal protein, central domain"/>
    <property type="match status" value="1"/>
</dbReference>
<dbReference type="Gene3D" id="1.20.190.10">
    <property type="entry name" value="Pesticidal crystal protein, N-terminal domain"/>
    <property type="match status" value="1"/>
</dbReference>
<dbReference type="InterPro" id="IPR008979">
    <property type="entry name" value="Galactose-bd-like_sf"/>
</dbReference>
<dbReference type="InterPro" id="IPR005638">
    <property type="entry name" value="Pest_crys_dom-III"/>
</dbReference>
<dbReference type="InterPro" id="IPR005639">
    <property type="entry name" value="Pest_crys_dom_I"/>
</dbReference>
<dbReference type="InterPro" id="IPR036716">
    <property type="entry name" value="Pest_crys_N_sf"/>
</dbReference>
<dbReference type="InterPro" id="IPR036399">
    <property type="entry name" value="Pest_cryst_cen_dom_sf"/>
</dbReference>
<dbReference type="InterPro" id="IPR001178">
    <property type="entry name" value="Pest_cryst_dom_II"/>
</dbReference>
<dbReference type="Pfam" id="PF03944">
    <property type="entry name" value="Endotoxin_C"/>
    <property type="match status" value="1"/>
</dbReference>
<dbReference type="Pfam" id="PF00555">
    <property type="entry name" value="Endotoxin_M"/>
    <property type="match status" value="1"/>
</dbReference>
<dbReference type="Pfam" id="PF03945">
    <property type="entry name" value="Endotoxin_N"/>
    <property type="match status" value="1"/>
</dbReference>
<dbReference type="SUPFAM" id="SSF51096">
    <property type="entry name" value="delta-Endotoxin (insectocide), middle domain"/>
    <property type="match status" value="1"/>
</dbReference>
<dbReference type="SUPFAM" id="SSF56849">
    <property type="entry name" value="delta-Endotoxin (insectocide), N-terminal domain"/>
    <property type="match status" value="1"/>
</dbReference>
<dbReference type="SUPFAM" id="SSF49785">
    <property type="entry name" value="Galactose-binding domain-like"/>
    <property type="match status" value="1"/>
</dbReference>
<feature type="chain" id="PRO_0000174089" description="Pesticidal crystal-like protein Cry16Aa">
    <location>
        <begin position="1"/>
        <end position="613"/>
    </location>
</feature>
<feature type="sequence conflict" description="In Ref. 1; AA sequence." evidence="1" ref="1">
    <original>H</original>
    <variation>Q</variation>
    <location>
        <position position="9"/>
    </location>
</feature>